<accession>Q5JGV3</accession>
<comment type="similarity">
    <text evidence="1">Belongs to the UPF0201 family.</text>
</comment>
<gene>
    <name type="ordered locus">TK1335</name>
</gene>
<keyword id="KW-1185">Reference proteome</keyword>
<sequence>MSELFEEVEVEAYVYPTEDIEKVKKAMLNLIPDLEFEAFDRGDYIILTAKTRSRKALSRLYELFRGQAILDTARSFLEEGYFGEEIIIKVNKQAAYAGVVNFNEESPLGPITIIIRTKDPQRLMKWLAPRTKDGVPIE</sequence>
<reference key="1">
    <citation type="journal article" date="2005" name="Genome Res.">
        <title>Complete genome sequence of the hyperthermophilic archaeon Thermococcus kodakaraensis KOD1 and comparison with Pyrococcus genomes.</title>
        <authorList>
            <person name="Fukui T."/>
            <person name="Atomi H."/>
            <person name="Kanai T."/>
            <person name="Matsumi R."/>
            <person name="Fujiwara S."/>
            <person name="Imanaka T."/>
        </authorList>
    </citation>
    <scope>NUCLEOTIDE SEQUENCE [LARGE SCALE GENOMIC DNA]</scope>
    <source>
        <strain>ATCC BAA-918 / JCM 12380 / KOD1</strain>
    </source>
</reference>
<proteinExistence type="inferred from homology"/>
<feature type="chain" id="PRO_0000094517" description="UPF0201 protein TK1335">
    <location>
        <begin position="1"/>
        <end position="138"/>
    </location>
</feature>
<name>Y1335_THEKO</name>
<protein>
    <recommendedName>
        <fullName evidence="1">UPF0201 protein TK1335</fullName>
    </recommendedName>
</protein>
<evidence type="ECO:0000255" key="1">
    <source>
        <dbReference type="HAMAP-Rule" id="MF_01112"/>
    </source>
</evidence>
<organism>
    <name type="scientific">Thermococcus kodakarensis (strain ATCC BAA-918 / JCM 12380 / KOD1)</name>
    <name type="common">Pyrococcus kodakaraensis (strain KOD1)</name>
    <dbReference type="NCBI Taxonomy" id="69014"/>
    <lineage>
        <taxon>Archaea</taxon>
        <taxon>Methanobacteriati</taxon>
        <taxon>Methanobacteriota</taxon>
        <taxon>Thermococci</taxon>
        <taxon>Thermococcales</taxon>
        <taxon>Thermococcaceae</taxon>
        <taxon>Thermococcus</taxon>
    </lineage>
</organism>
<dbReference type="EMBL" id="AP006878">
    <property type="protein sequence ID" value="BAD85524.1"/>
    <property type="molecule type" value="Genomic_DNA"/>
</dbReference>
<dbReference type="RefSeq" id="WP_011250286.1">
    <property type="nucleotide sequence ID" value="NC_006624.1"/>
</dbReference>
<dbReference type="SMR" id="Q5JGV3"/>
<dbReference type="STRING" id="69014.TK1335"/>
<dbReference type="EnsemblBacteria" id="BAD85524">
    <property type="protein sequence ID" value="BAD85524"/>
    <property type="gene ID" value="TK1335"/>
</dbReference>
<dbReference type="GeneID" id="78447855"/>
<dbReference type="KEGG" id="tko:TK1335"/>
<dbReference type="PATRIC" id="fig|69014.16.peg.1307"/>
<dbReference type="eggNOG" id="arCOG01043">
    <property type="taxonomic scope" value="Archaea"/>
</dbReference>
<dbReference type="HOGENOM" id="CLU_134829_0_0_2"/>
<dbReference type="InParanoid" id="Q5JGV3"/>
<dbReference type="OrthoDB" id="7819at2157"/>
<dbReference type="PhylomeDB" id="Q5JGV3"/>
<dbReference type="Proteomes" id="UP000000536">
    <property type="component" value="Chromosome"/>
</dbReference>
<dbReference type="Gene3D" id="3.30.1440.10">
    <property type="match status" value="1"/>
</dbReference>
<dbReference type="HAMAP" id="MF_01112">
    <property type="entry name" value="UPF0201"/>
    <property type="match status" value="1"/>
</dbReference>
<dbReference type="InterPro" id="IPR002739">
    <property type="entry name" value="PAB1135-like"/>
</dbReference>
<dbReference type="InterPro" id="IPR022803">
    <property type="entry name" value="Ribosomal_uL5_dom_sf"/>
</dbReference>
<dbReference type="NCBIfam" id="NF001687">
    <property type="entry name" value="PRK00447.1"/>
    <property type="match status" value="1"/>
</dbReference>
<dbReference type="PANTHER" id="PTHR39652">
    <property type="entry name" value="UPF0201 PROTEIN TK1335"/>
    <property type="match status" value="1"/>
</dbReference>
<dbReference type="PANTHER" id="PTHR39652:SF1">
    <property type="entry name" value="UPF0201 PROTEIN TK1335"/>
    <property type="match status" value="1"/>
</dbReference>
<dbReference type="Pfam" id="PF01877">
    <property type="entry name" value="RNA_binding"/>
    <property type="match status" value="1"/>
</dbReference>
<dbReference type="SUPFAM" id="SSF55282">
    <property type="entry name" value="RL5-like"/>
    <property type="match status" value="1"/>
</dbReference>